<dbReference type="EC" id="3.6.5.-" evidence="1"/>
<dbReference type="EMBL" id="CP000512">
    <property type="protein sequence ID" value="ABM34221.1"/>
    <property type="molecule type" value="Genomic_DNA"/>
</dbReference>
<dbReference type="RefSeq" id="WP_011796715.1">
    <property type="nucleotide sequence ID" value="NC_008752.1"/>
</dbReference>
<dbReference type="SMR" id="A1TTD3"/>
<dbReference type="STRING" id="397945.Aave_3673"/>
<dbReference type="GeneID" id="79791437"/>
<dbReference type="KEGG" id="aav:Aave_3673"/>
<dbReference type="eggNOG" id="COG0536">
    <property type="taxonomic scope" value="Bacteria"/>
</dbReference>
<dbReference type="HOGENOM" id="CLU_011747_2_0_4"/>
<dbReference type="OrthoDB" id="9807318at2"/>
<dbReference type="Proteomes" id="UP000002596">
    <property type="component" value="Chromosome"/>
</dbReference>
<dbReference type="GO" id="GO:0005737">
    <property type="term" value="C:cytoplasm"/>
    <property type="evidence" value="ECO:0007669"/>
    <property type="project" value="UniProtKB-SubCell"/>
</dbReference>
<dbReference type="GO" id="GO:0005525">
    <property type="term" value="F:GTP binding"/>
    <property type="evidence" value="ECO:0007669"/>
    <property type="project" value="UniProtKB-UniRule"/>
</dbReference>
<dbReference type="GO" id="GO:0003924">
    <property type="term" value="F:GTPase activity"/>
    <property type="evidence" value="ECO:0007669"/>
    <property type="project" value="UniProtKB-UniRule"/>
</dbReference>
<dbReference type="GO" id="GO:0000287">
    <property type="term" value="F:magnesium ion binding"/>
    <property type="evidence" value="ECO:0007669"/>
    <property type="project" value="InterPro"/>
</dbReference>
<dbReference type="GO" id="GO:0042254">
    <property type="term" value="P:ribosome biogenesis"/>
    <property type="evidence" value="ECO:0007669"/>
    <property type="project" value="UniProtKB-UniRule"/>
</dbReference>
<dbReference type="CDD" id="cd01898">
    <property type="entry name" value="Obg"/>
    <property type="match status" value="1"/>
</dbReference>
<dbReference type="FunFam" id="2.70.210.12:FF:000001">
    <property type="entry name" value="GTPase Obg"/>
    <property type="match status" value="1"/>
</dbReference>
<dbReference type="Gene3D" id="2.70.210.12">
    <property type="entry name" value="GTP1/OBG domain"/>
    <property type="match status" value="1"/>
</dbReference>
<dbReference type="Gene3D" id="3.40.50.300">
    <property type="entry name" value="P-loop containing nucleotide triphosphate hydrolases"/>
    <property type="match status" value="1"/>
</dbReference>
<dbReference type="HAMAP" id="MF_01454">
    <property type="entry name" value="GTPase_Obg"/>
    <property type="match status" value="1"/>
</dbReference>
<dbReference type="InterPro" id="IPR031167">
    <property type="entry name" value="G_OBG"/>
</dbReference>
<dbReference type="InterPro" id="IPR006073">
    <property type="entry name" value="GTP-bd"/>
</dbReference>
<dbReference type="InterPro" id="IPR014100">
    <property type="entry name" value="GTP-bd_Obg/CgtA"/>
</dbReference>
<dbReference type="InterPro" id="IPR006074">
    <property type="entry name" value="GTP1-OBG_CS"/>
</dbReference>
<dbReference type="InterPro" id="IPR006169">
    <property type="entry name" value="GTP1_OBG_dom"/>
</dbReference>
<dbReference type="InterPro" id="IPR036726">
    <property type="entry name" value="GTP1_OBG_dom_sf"/>
</dbReference>
<dbReference type="InterPro" id="IPR045086">
    <property type="entry name" value="OBG_GTPase"/>
</dbReference>
<dbReference type="InterPro" id="IPR027417">
    <property type="entry name" value="P-loop_NTPase"/>
</dbReference>
<dbReference type="NCBIfam" id="TIGR02729">
    <property type="entry name" value="Obg_CgtA"/>
    <property type="match status" value="1"/>
</dbReference>
<dbReference type="NCBIfam" id="NF008954">
    <property type="entry name" value="PRK12296.1"/>
    <property type="match status" value="1"/>
</dbReference>
<dbReference type="NCBIfam" id="NF008955">
    <property type="entry name" value="PRK12297.1"/>
    <property type="match status" value="1"/>
</dbReference>
<dbReference type="NCBIfam" id="NF008956">
    <property type="entry name" value="PRK12299.1"/>
    <property type="match status" value="1"/>
</dbReference>
<dbReference type="PANTHER" id="PTHR11702">
    <property type="entry name" value="DEVELOPMENTALLY REGULATED GTP-BINDING PROTEIN-RELATED"/>
    <property type="match status" value="1"/>
</dbReference>
<dbReference type="PANTHER" id="PTHR11702:SF31">
    <property type="entry name" value="MITOCHONDRIAL RIBOSOME-ASSOCIATED GTPASE 2"/>
    <property type="match status" value="1"/>
</dbReference>
<dbReference type="Pfam" id="PF01018">
    <property type="entry name" value="GTP1_OBG"/>
    <property type="match status" value="1"/>
</dbReference>
<dbReference type="Pfam" id="PF01926">
    <property type="entry name" value="MMR_HSR1"/>
    <property type="match status" value="1"/>
</dbReference>
<dbReference type="PIRSF" id="PIRSF002401">
    <property type="entry name" value="GTP_bd_Obg/CgtA"/>
    <property type="match status" value="1"/>
</dbReference>
<dbReference type="PRINTS" id="PR00326">
    <property type="entry name" value="GTP1OBG"/>
</dbReference>
<dbReference type="SUPFAM" id="SSF82051">
    <property type="entry name" value="Obg GTP-binding protein N-terminal domain"/>
    <property type="match status" value="1"/>
</dbReference>
<dbReference type="SUPFAM" id="SSF52540">
    <property type="entry name" value="P-loop containing nucleoside triphosphate hydrolases"/>
    <property type="match status" value="1"/>
</dbReference>
<dbReference type="PROSITE" id="PS51710">
    <property type="entry name" value="G_OBG"/>
    <property type="match status" value="1"/>
</dbReference>
<dbReference type="PROSITE" id="PS00905">
    <property type="entry name" value="GTP1_OBG"/>
    <property type="match status" value="1"/>
</dbReference>
<dbReference type="PROSITE" id="PS51883">
    <property type="entry name" value="OBG"/>
    <property type="match status" value="1"/>
</dbReference>
<name>OBG_PARC0</name>
<sequence>MKFVDEAFIDVAAGDGGNGCVSFRHEKYKEFGGPNGGDGGRGGHVFAVADPSLNTLVDYRYSRRHEAKRGEHGMGSDMFGAAGDDITLKMPVGTIISDADTGEVLFELLKPGETITIAKGGDGGFGNMRFKSAINRAPRQKTPGWPGERRNLKLELKVLADVGLLGMPNAGKSTFIAAVSNARPKIADYPFTTLHPNLGVVRVGPEQSFVVADIPGLIEGASEGAGLGHQFLRHLQRTRLLLHVVDLAPFDESVDPVAQATAIVGELRKYDAELYEKPRWLVLNKLDMVPGDERAARVKDFVKRFRWKGPVFEISALTREGCEPLIQAIYQHVRAQQQAEQVQEVVDPRFADDAASD</sequence>
<proteinExistence type="inferred from homology"/>
<organism>
    <name type="scientific">Paracidovorax citrulli (strain AAC00-1)</name>
    <name type="common">Acidovorax citrulli</name>
    <dbReference type="NCBI Taxonomy" id="397945"/>
    <lineage>
        <taxon>Bacteria</taxon>
        <taxon>Pseudomonadati</taxon>
        <taxon>Pseudomonadota</taxon>
        <taxon>Betaproteobacteria</taxon>
        <taxon>Burkholderiales</taxon>
        <taxon>Comamonadaceae</taxon>
        <taxon>Paracidovorax</taxon>
    </lineage>
</organism>
<evidence type="ECO:0000255" key="1">
    <source>
        <dbReference type="HAMAP-Rule" id="MF_01454"/>
    </source>
</evidence>
<evidence type="ECO:0000255" key="2">
    <source>
        <dbReference type="PROSITE-ProRule" id="PRU01231"/>
    </source>
</evidence>
<protein>
    <recommendedName>
        <fullName evidence="1">GTPase Obg</fullName>
        <ecNumber evidence="1">3.6.5.-</ecNumber>
    </recommendedName>
    <alternativeName>
        <fullName evidence="1">GTP-binding protein Obg</fullName>
    </alternativeName>
</protein>
<accession>A1TTD3</accession>
<reference key="1">
    <citation type="submission" date="2006-12" db="EMBL/GenBank/DDBJ databases">
        <title>Complete sequence of Acidovorax avenae subsp. citrulli AAC00-1.</title>
        <authorList>
            <person name="Copeland A."/>
            <person name="Lucas S."/>
            <person name="Lapidus A."/>
            <person name="Barry K."/>
            <person name="Detter J.C."/>
            <person name="Glavina del Rio T."/>
            <person name="Dalin E."/>
            <person name="Tice H."/>
            <person name="Pitluck S."/>
            <person name="Kiss H."/>
            <person name="Brettin T."/>
            <person name="Bruce D."/>
            <person name="Han C."/>
            <person name="Tapia R."/>
            <person name="Gilna P."/>
            <person name="Schmutz J."/>
            <person name="Larimer F."/>
            <person name="Land M."/>
            <person name="Hauser L."/>
            <person name="Kyrpides N."/>
            <person name="Kim E."/>
            <person name="Stahl D."/>
            <person name="Richardson P."/>
        </authorList>
    </citation>
    <scope>NUCLEOTIDE SEQUENCE [LARGE SCALE GENOMIC DNA]</scope>
    <source>
        <strain>AAC00-1</strain>
    </source>
</reference>
<gene>
    <name evidence="1" type="primary">obg</name>
    <name type="ordered locus">Aave_3673</name>
</gene>
<keyword id="KW-0963">Cytoplasm</keyword>
<keyword id="KW-0342">GTP-binding</keyword>
<keyword id="KW-0378">Hydrolase</keyword>
<keyword id="KW-0460">Magnesium</keyword>
<keyword id="KW-0479">Metal-binding</keyword>
<keyword id="KW-0547">Nucleotide-binding</keyword>
<comment type="function">
    <text evidence="1">An essential GTPase which binds GTP, GDP and possibly (p)ppGpp with moderate affinity, with high nucleotide exchange rates and a fairly low GTP hydrolysis rate. Plays a role in control of the cell cycle, stress response, ribosome biogenesis and in those bacteria that undergo differentiation, in morphogenesis control.</text>
</comment>
<comment type="cofactor">
    <cofactor evidence="1">
        <name>Mg(2+)</name>
        <dbReference type="ChEBI" id="CHEBI:18420"/>
    </cofactor>
</comment>
<comment type="subunit">
    <text evidence="1">Monomer.</text>
</comment>
<comment type="subcellular location">
    <subcellularLocation>
        <location evidence="1">Cytoplasm</location>
    </subcellularLocation>
</comment>
<comment type="similarity">
    <text evidence="1">Belongs to the TRAFAC class OBG-HflX-like GTPase superfamily. OBG GTPase family.</text>
</comment>
<feature type="chain" id="PRO_0000385663" description="GTPase Obg">
    <location>
        <begin position="1"/>
        <end position="357"/>
    </location>
</feature>
<feature type="domain" description="Obg" evidence="2">
    <location>
        <begin position="1"/>
        <end position="159"/>
    </location>
</feature>
<feature type="domain" description="OBG-type G" evidence="1">
    <location>
        <begin position="160"/>
        <end position="334"/>
    </location>
</feature>
<feature type="binding site" evidence="1">
    <location>
        <begin position="166"/>
        <end position="173"/>
    </location>
    <ligand>
        <name>GTP</name>
        <dbReference type="ChEBI" id="CHEBI:37565"/>
    </ligand>
</feature>
<feature type="binding site" evidence="1">
    <location>
        <position position="173"/>
    </location>
    <ligand>
        <name>Mg(2+)</name>
        <dbReference type="ChEBI" id="CHEBI:18420"/>
    </ligand>
</feature>
<feature type="binding site" evidence="1">
    <location>
        <begin position="191"/>
        <end position="195"/>
    </location>
    <ligand>
        <name>GTP</name>
        <dbReference type="ChEBI" id="CHEBI:37565"/>
    </ligand>
</feature>
<feature type="binding site" evidence="1">
    <location>
        <position position="193"/>
    </location>
    <ligand>
        <name>Mg(2+)</name>
        <dbReference type="ChEBI" id="CHEBI:18420"/>
    </ligand>
</feature>
<feature type="binding site" evidence="1">
    <location>
        <begin position="213"/>
        <end position="216"/>
    </location>
    <ligand>
        <name>GTP</name>
        <dbReference type="ChEBI" id="CHEBI:37565"/>
    </ligand>
</feature>
<feature type="binding site" evidence="1">
    <location>
        <begin position="284"/>
        <end position="287"/>
    </location>
    <ligand>
        <name>GTP</name>
        <dbReference type="ChEBI" id="CHEBI:37565"/>
    </ligand>
</feature>
<feature type="binding site" evidence="1">
    <location>
        <begin position="315"/>
        <end position="317"/>
    </location>
    <ligand>
        <name>GTP</name>
        <dbReference type="ChEBI" id="CHEBI:37565"/>
    </ligand>
</feature>